<feature type="chain" id="PRO_0000294322" description="Autophagy-related protein 101">
    <location>
        <begin position="1"/>
        <end position="218"/>
    </location>
</feature>
<feature type="region of interest" description="Important for interaction with ATG13" evidence="3">
    <location>
        <begin position="152"/>
        <end position="156"/>
    </location>
</feature>
<feature type="mutagenesis site" description="Impairs interaction with ATG13; when associated with R-54." evidence="3">
    <original>H</original>
    <variation>S</variation>
    <location>
        <position position="31"/>
    </location>
</feature>
<feature type="mutagenesis site" description="Impairs interaction with ATG13; when associated with S-31." evidence="3">
    <original>D</original>
    <variation>R</variation>
    <location>
        <position position="54"/>
    </location>
</feature>
<feature type="mutagenesis site" description="Abolishes interaction with ATG13; when associated with D-153 and D-156." evidence="3">
    <original>I</original>
    <variation>D</variation>
    <location>
        <position position="152"/>
    </location>
</feature>
<feature type="mutagenesis site" description="Abolishes interaction with ATG13; when associated with D-152 and D-156." evidence="3">
    <original>I</original>
    <variation>D</variation>
    <location>
        <position position="153"/>
    </location>
</feature>
<feature type="mutagenesis site" description="Abolishes interaction with ATG13; when associated with D-152 and D-152." evidence="3">
    <original>V</original>
    <variation>D</variation>
    <location>
        <position position="156"/>
    </location>
</feature>
<feature type="sequence conflict" description="In Ref. 1; BAB13907." evidence="4" ref="1">
    <original>I</original>
    <variation>T</variation>
    <location>
        <position position="47"/>
    </location>
</feature>
<feature type="strand" evidence="8">
    <location>
        <begin position="4"/>
        <end position="13"/>
    </location>
</feature>
<feature type="helix" evidence="8">
    <location>
        <begin position="14"/>
        <end position="16"/>
    </location>
</feature>
<feature type="helix" evidence="8">
    <location>
        <begin position="17"/>
        <end position="31"/>
    </location>
</feature>
<feature type="strand" evidence="9">
    <location>
        <begin position="32"/>
        <end position="34"/>
    </location>
</feature>
<feature type="strand" evidence="8">
    <location>
        <begin position="37"/>
        <end position="39"/>
    </location>
</feature>
<feature type="helix" evidence="7">
    <location>
        <begin position="41"/>
        <end position="43"/>
    </location>
</feature>
<feature type="strand" evidence="8">
    <location>
        <begin position="45"/>
        <end position="47"/>
    </location>
</feature>
<feature type="strand" evidence="8">
    <location>
        <begin position="52"/>
        <end position="56"/>
    </location>
</feature>
<feature type="strand" evidence="8">
    <location>
        <begin position="58"/>
        <end position="61"/>
    </location>
</feature>
<feature type="strand" evidence="8">
    <location>
        <begin position="63"/>
        <end position="68"/>
    </location>
</feature>
<feature type="helix" evidence="8">
    <location>
        <begin position="70"/>
        <end position="89"/>
    </location>
</feature>
<feature type="strand" evidence="8">
    <location>
        <begin position="92"/>
        <end position="105"/>
    </location>
</feature>
<feature type="strand" evidence="8">
    <location>
        <begin position="113"/>
        <end position="129"/>
    </location>
</feature>
<feature type="helix" evidence="8">
    <location>
        <begin position="134"/>
        <end position="161"/>
    </location>
</feature>
<feature type="helix" evidence="8">
    <location>
        <begin position="171"/>
        <end position="176"/>
    </location>
</feature>
<feature type="strand" evidence="10">
    <location>
        <begin position="182"/>
        <end position="184"/>
    </location>
</feature>
<feature type="strand" evidence="8">
    <location>
        <begin position="186"/>
        <end position="188"/>
    </location>
</feature>
<feature type="strand" evidence="8">
    <location>
        <begin position="190"/>
        <end position="198"/>
    </location>
</feature>
<feature type="strand" evidence="7">
    <location>
        <begin position="202"/>
        <end position="207"/>
    </location>
</feature>
<feature type="helix" evidence="9">
    <location>
        <begin position="208"/>
        <end position="214"/>
    </location>
</feature>
<evidence type="ECO:0000269" key="1">
    <source>
    </source>
</evidence>
<evidence type="ECO:0000269" key="2">
    <source>
    </source>
</evidence>
<evidence type="ECO:0000269" key="3">
    <source>
    </source>
</evidence>
<evidence type="ECO:0000305" key="4"/>
<evidence type="ECO:0007744" key="5">
    <source>
        <dbReference type="PDB" id="4WZG"/>
    </source>
</evidence>
<evidence type="ECO:0007744" key="6">
    <source>
        <dbReference type="PDB" id="5C50"/>
    </source>
</evidence>
<evidence type="ECO:0007829" key="7">
    <source>
        <dbReference type="PDB" id="4WZG"/>
    </source>
</evidence>
<evidence type="ECO:0007829" key="8">
    <source>
        <dbReference type="PDB" id="5C50"/>
    </source>
</evidence>
<evidence type="ECO:0007829" key="9">
    <source>
        <dbReference type="PDB" id="5XUY"/>
    </source>
</evidence>
<evidence type="ECO:0007829" key="10">
    <source>
        <dbReference type="PDB" id="8DO8"/>
    </source>
</evidence>
<comment type="function">
    <text evidence="1 2">Autophagy factor required for autophagosome formation. Stabilizes ATG13, protecting it from proteasomal degradation.</text>
</comment>
<comment type="subunit">
    <text evidence="1 2 3">Interacts with ATG13 (PubMed:19287211, PubMed:19597335, PubMed:26299944). Associates with a complex composed of ATG13, ULK1 and RB1CC1; the association with this complex requires the presence of ATG13 (PubMed:19287211, PubMed:19597335).</text>
</comment>
<comment type="interaction">
    <interactant intactId="EBI-2946739">
        <id>Q9BSB4</id>
    </interactant>
    <interactant intactId="EBI-2946739">
        <id>Q9BSB4</id>
        <label>ATG101</label>
    </interactant>
    <organismsDiffer>false</organismsDiffer>
    <experiments>2</experiments>
</comment>
<comment type="interaction">
    <interactant intactId="EBI-2946739">
        <id>Q9BSB4</id>
    </interactant>
    <interactant intactId="EBI-2798775">
        <id>O75143</id>
        <label>ATG13</label>
    </interactant>
    <organismsDiffer>false</organismsDiffer>
    <experiments>21</experiments>
</comment>
<comment type="interaction">
    <interactant intactId="EBI-2946739">
        <id>Q9BSB4</id>
    </interactant>
    <interactant intactId="EBI-20151086">
        <id>O75143-2</id>
        <label>ATG13</label>
    </interactant>
    <organismsDiffer>false</organismsDiffer>
    <experiments>3</experiments>
</comment>
<comment type="interaction">
    <interactant intactId="EBI-2946739">
        <id>Q9BSB4</id>
    </interactant>
    <interactant intactId="EBI-746969">
        <id>Q9H0R8</id>
        <label>GABARAPL1</label>
    </interactant>
    <organismsDiffer>false</organismsDiffer>
    <experiments>2</experiments>
</comment>
<comment type="interaction">
    <interactant intactId="EBI-2946739">
        <id>Q9BSB4</id>
    </interactant>
    <interactant intactId="EBI-720116">
        <id>P60520</id>
        <label>GABARAPL2</label>
    </interactant>
    <organismsDiffer>false</organismsDiffer>
    <experiments>2</experiments>
</comment>
<comment type="interaction">
    <interactant intactId="EBI-2946739">
        <id>Q9BSB4</id>
    </interactant>
    <interactant intactId="EBI-2603996">
        <id>Q9BXW4</id>
        <label>MAP1LC3C</label>
    </interactant>
    <organismsDiffer>false</organismsDiffer>
    <experiments>4</experiments>
</comment>
<comment type="interaction">
    <interactant intactId="EBI-2946739">
        <id>Q9BSB4</id>
    </interactant>
    <interactant intactId="EBI-1047793">
        <id>Q8TDY2</id>
        <label>RB1CC1</label>
    </interactant>
    <organismsDiffer>false</organismsDiffer>
    <experiments>11</experiments>
</comment>
<comment type="interaction">
    <interactant intactId="EBI-2946739">
        <id>Q9BSB4</id>
    </interactant>
    <interactant intactId="EBI-8391007">
        <id>Q91YI1</id>
        <label>Atg13</label>
    </interactant>
    <organismsDiffer>true</organismsDiffer>
    <experiments>2</experiments>
</comment>
<comment type="subcellular location">
    <subcellularLocation>
        <location evidence="2">Cytoplasm</location>
    </subcellularLocation>
    <subcellularLocation>
        <location evidence="2">Preautophagosomal structure</location>
    </subcellularLocation>
    <text evidence="2">Under starvation conditions, it is localized to puncate structures primarily representing the isolation membrane; the isolation membrane sequesters a portion of the cytoplasm resulting in autophagosome formation.</text>
</comment>
<comment type="similarity">
    <text evidence="4">Belongs to the ATG101 family.</text>
</comment>
<comment type="sequence caution" evidence="4">
    <conflict type="frameshift">
        <sequence resource="EMBL-CDS" id="AAG17273"/>
    </conflict>
</comment>
<protein>
    <recommendedName>
        <fullName>Autophagy-related protein 101</fullName>
    </recommendedName>
</protein>
<gene>
    <name type="primary">ATG101</name>
    <name type="synonym">C12orf44</name>
    <name type="ORF">PP894</name>
</gene>
<organism>
    <name type="scientific">Homo sapiens</name>
    <name type="common">Human</name>
    <dbReference type="NCBI Taxonomy" id="9606"/>
    <lineage>
        <taxon>Eukaryota</taxon>
        <taxon>Metazoa</taxon>
        <taxon>Chordata</taxon>
        <taxon>Craniata</taxon>
        <taxon>Vertebrata</taxon>
        <taxon>Euteleostomi</taxon>
        <taxon>Mammalia</taxon>
        <taxon>Eutheria</taxon>
        <taxon>Euarchontoglires</taxon>
        <taxon>Primates</taxon>
        <taxon>Haplorrhini</taxon>
        <taxon>Catarrhini</taxon>
        <taxon>Hominidae</taxon>
        <taxon>Homo</taxon>
    </lineage>
</organism>
<reference key="1">
    <citation type="journal article" date="2004" name="Nat. Genet.">
        <title>Complete sequencing and characterization of 21,243 full-length human cDNAs.</title>
        <authorList>
            <person name="Ota T."/>
            <person name="Suzuki Y."/>
            <person name="Nishikawa T."/>
            <person name="Otsuki T."/>
            <person name="Sugiyama T."/>
            <person name="Irie R."/>
            <person name="Wakamatsu A."/>
            <person name="Hayashi K."/>
            <person name="Sato H."/>
            <person name="Nagai K."/>
            <person name="Kimura K."/>
            <person name="Makita H."/>
            <person name="Sekine M."/>
            <person name="Obayashi M."/>
            <person name="Nishi T."/>
            <person name="Shibahara T."/>
            <person name="Tanaka T."/>
            <person name="Ishii S."/>
            <person name="Yamamoto J."/>
            <person name="Saito K."/>
            <person name="Kawai Y."/>
            <person name="Isono Y."/>
            <person name="Nakamura Y."/>
            <person name="Nagahari K."/>
            <person name="Murakami K."/>
            <person name="Yasuda T."/>
            <person name="Iwayanagi T."/>
            <person name="Wagatsuma M."/>
            <person name="Shiratori A."/>
            <person name="Sudo H."/>
            <person name="Hosoiri T."/>
            <person name="Kaku Y."/>
            <person name="Kodaira H."/>
            <person name="Kondo H."/>
            <person name="Sugawara M."/>
            <person name="Takahashi M."/>
            <person name="Kanda K."/>
            <person name="Yokoi T."/>
            <person name="Furuya T."/>
            <person name="Kikkawa E."/>
            <person name="Omura Y."/>
            <person name="Abe K."/>
            <person name="Kamihara K."/>
            <person name="Katsuta N."/>
            <person name="Sato K."/>
            <person name="Tanikawa M."/>
            <person name="Yamazaki M."/>
            <person name="Ninomiya K."/>
            <person name="Ishibashi T."/>
            <person name="Yamashita H."/>
            <person name="Murakawa K."/>
            <person name="Fujimori K."/>
            <person name="Tanai H."/>
            <person name="Kimata M."/>
            <person name="Watanabe M."/>
            <person name="Hiraoka S."/>
            <person name="Chiba Y."/>
            <person name="Ishida S."/>
            <person name="Ono Y."/>
            <person name="Takiguchi S."/>
            <person name="Watanabe S."/>
            <person name="Yosida M."/>
            <person name="Hotuta T."/>
            <person name="Kusano J."/>
            <person name="Kanehori K."/>
            <person name="Takahashi-Fujii A."/>
            <person name="Hara H."/>
            <person name="Tanase T.-O."/>
            <person name="Nomura Y."/>
            <person name="Togiya S."/>
            <person name="Komai F."/>
            <person name="Hara R."/>
            <person name="Takeuchi K."/>
            <person name="Arita M."/>
            <person name="Imose N."/>
            <person name="Musashino K."/>
            <person name="Yuuki H."/>
            <person name="Oshima A."/>
            <person name="Sasaki N."/>
            <person name="Aotsuka S."/>
            <person name="Yoshikawa Y."/>
            <person name="Matsunawa H."/>
            <person name="Ichihara T."/>
            <person name="Shiohata N."/>
            <person name="Sano S."/>
            <person name="Moriya S."/>
            <person name="Momiyama H."/>
            <person name="Satoh N."/>
            <person name="Takami S."/>
            <person name="Terashima Y."/>
            <person name="Suzuki O."/>
            <person name="Nakagawa S."/>
            <person name="Senoh A."/>
            <person name="Mizoguchi H."/>
            <person name="Goto Y."/>
            <person name="Shimizu F."/>
            <person name="Wakebe H."/>
            <person name="Hishigaki H."/>
            <person name="Watanabe T."/>
            <person name="Sugiyama A."/>
            <person name="Takemoto M."/>
            <person name="Kawakami B."/>
            <person name="Yamazaki M."/>
            <person name="Watanabe K."/>
            <person name="Kumagai A."/>
            <person name="Itakura S."/>
            <person name="Fukuzumi Y."/>
            <person name="Fujimori Y."/>
            <person name="Komiyama M."/>
            <person name="Tashiro H."/>
            <person name="Tanigami A."/>
            <person name="Fujiwara T."/>
            <person name="Ono T."/>
            <person name="Yamada K."/>
            <person name="Fujii Y."/>
            <person name="Ozaki K."/>
            <person name="Hirao M."/>
            <person name="Ohmori Y."/>
            <person name="Kawabata A."/>
            <person name="Hikiji T."/>
            <person name="Kobatake N."/>
            <person name="Inagaki H."/>
            <person name="Ikema Y."/>
            <person name="Okamoto S."/>
            <person name="Okitani R."/>
            <person name="Kawakami T."/>
            <person name="Noguchi S."/>
            <person name="Itoh T."/>
            <person name="Shigeta K."/>
            <person name="Senba T."/>
            <person name="Matsumura K."/>
            <person name="Nakajima Y."/>
            <person name="Mizuno T."/>
            <person name="Morinaga M."/>
            <person name="Sasaki M."/>
            <person name="Togashi T."/>
            <person name="Oyama M."/>
            <person name="Hata H."/>
            <person name="Watanabe M."/>
            <person name="Komatsu T."/>
            <person name="Mizushima-Sugano J."/>
            <person name="Satoh T."/>
            <person name="Shirai Y."/>
            <person name="Takahashi Y."/>
            <person name="Nakagawa K."/>
            <person name="Okumura K."/>
            <person name="Nagase T."/>
            <person name="Nomura N."/>
            <person name="Kikuchi H."/>
            <person name="Masuho Y."/>
            <person name="Yamashita R."/>
            <person name="Nakai K."/>
            <person name="Yada T."/>
            <person name="Nakamura Y."/>
            <person name="Ohara O."/>
            <person name="Isogai T."/>
            <person name="Sugano S."/>
        </authorList>
    </citation>
    <scope>NUCLEOTIDE SEQUENCE [LARGE SCALE MRNA]</scope>
    <source>
        <tissue>Embryo</tissue>
    </source>
</reference>
<reference key="2">
    <citation type="journal article" date="2004" name="Proc. Natl. Acad. Sci. U.S.A.">
        <title>Large-scale cDNA transfection screening for genes related to cancer development and progression.</title>
        <authorList>
            <person name="Wan D."/>
            <person name="Gong Y."/>
            <person name="Qin W."/>
            <person name="Zhang P."/>
            <person name="Li J."/>
            <person name="Wei L."/>
            <person name="Zhou X."/>
            <person name="Li H."/>
            <person name="Qiu X."/>
            <person name="Zhong F."/>
            <person name="He L."/>
            <person name="Yu J."/>
            <person name="Yao G."/>
            <person name="Jiang H."/>
            <person name="Qian L."/>
            <person name="Yu Y."/>
            <person name="Shu H."/>
            <person name="Chen X."/>
            <person name="Xu H."/>
            <person name="Guo M."/>
            <person name="Pan Z."/>
            <person name="Chen Y."/>
            <person name="Ge C."/>
            <person name="Yang S."/>
            <person name="Gu J."/>
        </authorList>
    </citation>
    <scope>NUCLEOTIDE SEQUENCE [LARGE SCALE MRNA]</scope>
</reference>
<reference key="3">
    <citation type="journal article" date="2006" name="Nature">
        <title>The finished DNA sequence of human chromosome 12.</title>
        <authorList>
            <person name="Scherer S.E."/>
            <person name="Muzny D.M."/>
            <person name="Buhay C.J."/>
            <person name="Chen R."/>
            <person name="Cree A."/>
            <person name="Ding Y."/>
            <person name="Dugan-Rocha S."/>
            <person name="Gill R."/>
            <person name="Gunaratne P."/>
            <person name="Harris R.A."/>
            <person name="Hawes A.C."/>
            <person name="Hernandez J."/>
            <person name="Hodgson A.V."/>
            <person name="Hume J."/>
            <person name="Jackson A."/>
            <person name="Khan Z.M."/>
            <person name="Kovar-Smith C."/>
            <person name="Lewis L.R."/>
            <person name="Lozado R.J."/>
            <person name="Metzker M.L."/>
            <person name="Milosavljevic A."/>
            <person name="Miner G.R."/>
            <person name="Montgomery K.T."/>
            <person name="Morgan M.B."/>
            <person name="Nazareth L.V."/>
            <person name="Scott G."/>
            <person name="Sodergren E."/>
            <person name="Song X.-Z."/>
            <person name="Steffen D."/>
            <person name="Lovering R.C."/>
            <person name="Wheeler D.A."/>
            <person name="Worley K.C."/>
            <person name="Yuan Y."/>
            <person name="Zhang Z."/>
            <person name="Adams C.Q."/>
            <person name="Ansari-Lari M.A."/>
            <person name="Ayele M."/>
            <person name="Brown M.J."/>
            <person name="Chen G."/>
            <person name="Chen Z."/>
            <person name="Clerc-Blankenburg K.P."/>
            <person name="Davis C."/>
            <person name="Delgado O."/>
            <person name="Dinh H.H."/>
            <person name="Draper H."/>
            <person name="Gonzalez-Garay M.L."/>
            <person name="Havlak P."/>
            <person name="Jackson L.R."/>
            <person name="Jacob L.S."/>
            <person name="Kelly S.H."/>
            <person name="Li L."/>
            <person name="Li Z."/>
            <person name="Liu J."/>
            <person name="Liu W."/>
            <person name="Lu J."/>
            <person name="Maheshwari M."/>
            <person name="Nguyen B.-V."/>
            <person name="Okwuonu G.O."/>
            <person name="Pasternak S."/>
            <person name="Perez L.M."/>
            <person name="Plopper F.J.H."/>
            <person name="Santibanez J."/>
            <person name="Shen H."/>
            <person name="Tabor P.E."/>
            <person name="Verduzco D."/>
            <person name="Waldron L."/>
            <person name="Wang Q."/>
            <person name="Williams G.A."/>
            <person name="Zhang J."/>
            <person name="Zhou J."/>
            <person name="Allen C.C."/>
            <person name="Amin A.G."/>
            <person name="Anyalebechi V."/>
            <person name="Bailey M."/>
            <person name="Barbaria J.A."/>
            <person name="Bimage K.E."/>
            <person name="Bryant N.P."/>
            <person name="Burch P.E."/>
            <person name="Burkett C.E."/>
            <person name="Burrell K.L."/>
            <person name="Calderon E."/>
            <person name="Cardenas V."/>
            <person name="Carter K."/>
            <person name="Casias K."/>
            <person name="Cavazos I."/>
            <person name="Cavazos S.R."/>
            <person name="Ceasar H."/>
            <person name="Chacko J."/>
            <person name="Chan S.N."/>
            <person name="Chavez D."/>
            <person name="Christopoulos C."/>
            <person name="Chu J."/>
            <person name="Cockrell R."/>
            <person name="Cox C.D."/>
            <person name="Dang M."/>
            <person name="Dathorne S.R."/>
            <person name="David R."/>
            <person name="Davis C.M."/>
            <person name="Davy-Carroll L."/>
            <person name="Deshazo D.R."/>
            <person name="Donlin J.E."/>
            <person name="D'Souza L."/>
            <person name="Eaves K.A."/>
            <person name="Egan A."/>
            <person name="Emery-Cohen A.J."/>
            <person name="Escotto M."/>
            <person name="Flagg N."/>
            <person name="Forbes L.D."/>
            <person name="Gabisi A.M."/>
            <person name="Garza M."/>
            <person name="Hamilton C."/>
            <person name="Henderson N."/>
            <person name="Hernandez O."/>
            <person name="Hines S."/>
            <person name="Hogues M.E."/>
            <person name="Huang M."/>
            <person name="Idlebird D.G."/>
            <person name="Johnson R."/>
            <person name="Jolivet A."/>
            <person name="Jones S."/>
            <person name="Kagan R."/>
            <person name="King L.M."/>
            <person name="Leal B."/>
            <person name="Lebow H."/>
            <person name="Lee S."/>
            <person name="LeVan J.M."/>
            <person name="Lewis L.C."/>
            <person name="London P."/>
            <person name="Lorensuhewa L.M."/>
            <person name="Loulseged H."/>
            <person name="Lovett D.A."/>
            <person name="Lucier A."/>
            <person name="Lucier R.L."/>
            <person name="Ma J."/>
            <person name="Madu R.C."/>
            <person name="Mapua P."/>
            <person name="Martindale A.D."/>
            <person name="Martinez E."/>
            <person name="Massey E."/>
            <person name="Mawhiney S."/>
            <person name="Meador M.G."/>
            <person name="Mendez S."/>
            <person name="Mercado C."/>
            <person name="Mercado I.C."/>
            <person name="Merritt C.E."/>
            <person name="Miner Z.L."/>
            <person name="Minja E."/>
            <person name="Mitchell T."/>
            <person name="Mohabbat F."/>
            <person name="Mohabbat K."/>
            <person name="Montgomery B."/>
            <person name="Moore N."/>
            <person name="Morris S."/>
            <person name="Munidasa M."/>
            <person name="Ngo R.N."/>
            <person name="Nguyen N.B."/>
            <person name="Nickerson E."/>
            <person name="Nwaokelemeh O.O."/>
            <person name="Nwokenkwo S."/>
            <person name="Obregon M."/>
            <person name="Oguh M."/>
            <person name="Oragunye N."/>
            <person name="Oviedo R.J."/>
            <person name="Parish B.J."/>
            <person name="Parker D.N."/>
            <person name="Parrish J."/>
            <person name="Parks K.L."/>
            <person name="Paul H.A."/>
            <person name="Payton B.A."/>
            <person name="Perez A."/>
            <person name="Perrin W."/>
            <person name="Pickens A."/>
            <person name="Primus E.L."/>
            <person name="Pu L.-L."/>
            <person name="Puazo M."/>
            <person name="Quiles M.M."/>
            <person name="Quiroz J.B."/>
            <person name="Rabata D."/>
            <person name="Reeves K."/>
            <person name="Ruiz S.J."/>
            <person name="Shao H."/>
            <person name="Sisson I."/>
            <person name="Sonaike T."/>
            <person name="Sorelle R.P."/>
            <person name="Sutton A.E."/>
            <person name="Svatek A.F."/>
            <person name="Svetz L.A."/>
            <person name="Tamerisa K.S."/>
            <person name="Taylor T.R."/>
            <person name="Teague B."/>
            <person name="Thomas N."/>
            <person name="Thorn R.D."/>
            <person name="Trejos Z.Y."/>
            <person name="Trevino B.K."/>
            <person name="Ukegbu O.N."/>
            <person name="Urban J.B."/>
            <person name="Vasquez L.I."/>
            <person name="Vera V.A."/>
            <person name="Villasana D.M."/>
            <person name="Wang L."/>
            <person name="Ward-Moore S."/>
            <person name="Warren J.T."/>
            <person name="Wei X."/>
            <person name="White F."/>
            <person name="Williamson A.L."/>
            <person name="Wleczyk R."/>
            <person name="Wooden H.S."/>
            <person name="Wooden S.H."/>
            <person name="Yen J."/>
            <person name="Yoon L."/>
            <person name="Yoon V."/>
            <person name="Zorrilla S.E."/>
            <person name="Nelson D."/>
            <person name="Kucherlapati R."/>
            <person name="Weinstock G."/>
            <person name="Gibbs R.A."/>
        </authorList>
    </citation>
    <scope>NUCLEOTIDE SEQUENCE [LARGE SCALE GENOMIC DNA]</scope>
</reference>
<reference key="4">
    <citation type="journal article" date="2004" name="Genome Res.">
        <title>The status, quality, and expansion of the NIH full-length cDNA project: the Mammalian Gene Collection (MGC).</title>
        <authorList>
            <consortium name="The MGC Project Team"/>
        </authorList>
    </citation>
    <scope>NUCLEOTIDE SEQUENCE [LARGE SCALE MRNA]</scope>
    <source>
        <tissue>Brain</tissue>
        <tissue>Uterus</tissue>
    </source>
</reference>
<reference key="5">
    <citation type="journal article" date="2009" name="Autophagy">
        <title>A novel, human Atg13 binding protein, Atg101, interacts with ULK1 and is essential for macroautophagy.</title>
        <authorList>
            <person name="Mercer C.A."/>
            <person name="Kaliappan A."/>
            <person name="Dennis P.B."/>
        </authorList>
    </citation>
    <scope>FUNCTION</scope>
    <scope>INTERACTION WITH ATG13</scope>
    <scope>COMPLEX FORMATION WITH ULK1 AND RB1CC1</scope>
</reference>
<reference key="6">
    <citation type="journal article" date="2009" name="Autophagy">
        <title>Atg101, a novel mammalian autophagy protein interacting with Atg13.</title>
        <authorList>
            <person name="Hosokawa N."/>
            <person name="Sasaki T."/>
            <person name="Iemura S.I."/>
            <person name="Natsume T."/>
            <person name="Hara T."/>
            <person name="Mizushima N."/>
        </authorList>
    </citation>
    <scope>FUNCTION AS AUTOPHAGY FACTOR</scope>
    <scope>SUBCELLULAR LOCATION</scope>
    <scope>SUBUNIT</scope>
    <scope>INTERACTION WITH ATG13</scope>
</reference>
<reference key="7">
    <citation type="journal article" date="2011" name="BMC Syst. Biol.">
        <title>Initial characterization of the human central proteome.</title>
        <authorList>
            <person name="Burkard T.R."/>
            <person name="Planyavsky M."/>
            <person name="Kaupe I."/>
            <person name="Breitwieser F.P."/>
            <person name="Buerckstuemmer T."/>
            <person name="Bennett K.L."/>
            <person name="Superti-Furga G."/>
            <person name="Colinge J."/>
        </authorList>
    </citation>
    <scope>IDENTIFICATION BY MASS SPECTROMETRY [LARGE SCALE ANALYSIS]</scope>
</reference>
<reference evidence="5" key="8">
    <citation type="journal article" date="2015" name="Autophagy">
        <title>The mammalian autophagy initiator complex contains 2 HORMA domain proteins.</title>
        <authorList>
            <person name="Michel M."/>
            <person name="Schwarten M."/>
            <person name="Decker C."/>
            <person name="Nagel-Steger L."/>
            <person name="Willbold D."/>
            <person name="Weiergraber O.H."/>
        </authorList>
    </citation>
    <scope>X-RAY CRYSTALLOGRAPHY (1.90 ANGSTROMS)</scope>
</reference>
<reference evidence="6" key="9">
    <citation type="journal article" date="2015" name="Structure">
        <title>Structure of the human Atg13-Atg101 HORMA heterodimer: an interaction hub within the ULK1 complex.</title>
        <authorList>
            <person name="Qi S."/>
            <person name="Kim do J."/>
            <person name="Stjepanovic G."/>
            <person name="Hurley J.H."/>
        </authorList>
    </citation>
    <scope>X-RAY CRYSTALLOGRAPHY (1.63 ANGSTROMS) OF 1-198 IN COMPLEX WITH ATG13</scope>
    <scope>INTERACTION WITH ATG13</scope>
    <scope>MUTAGENESIS OF HIS-31; ASP-54; ILE-152; ILE-153 AND VAL-156</scope>
</reference>
<proteinExistence type="evidence at protein level"/>
<sequence length="218" mass="25003">MNCRSEVLEVSVEGRQVEEAMLAVLHTVLLHRSTGKFHYKKEGTYSIGTVGTQDVDCDFIDFTYVRVSSEELDRALRKVVGEFKDALRNSGGDGLGQMSLEFYQKKKSRWPFSDECIPWEVWTVKVHVVALATEQERQICREKVGEKLCEKIINIVEVMNRHEYLPKMPTQSEVDNVFDTGLRDVQPYLYKISFQITDALGTSVTTTMRRLIKDTLAL</sequence>
<keyword id="KW-0002">3D-structure</keyword>
<keyword id="KW-0072">Autophagy</keyword>
<keyword id="KW-0963">Cytoplasm</keyword>
<keyword id="KW-1267">Proteomics identification</keyword>
<keyword id="KW-1185">Reference proteome</keyword>
<accession>Q9BSB4</accession>
<accession>Q9HAE2</accession>
<accession>Q9HBN1</accession>
<dbReference type="EMBL" id="AK021835">
    <property type="protein sequence ID" value="BAB13907.1"/>
    <property type="molecule type" value="mRNA"/>
</dbReference>
<dbReference type="EMBL" id="AF218031">
    <property type="protein sequence ID" value="AAG17273.1"/>
    <property type="status" value="ALT_FRAME"/>
    <property type="molecule type" value="mRNA"/>
</dbReference>
<dbReference type="EMBL" id="AC025259">
    <property type="status" value="NOT_ANNOTATED_CDS"/>
    <property type="molecule type" value="Genomic_DNA"/>
</dbReference>
<dbReference type="EMBL" id="BC005151">
    <property type="protein sequence ID" value="AAH05151.1"/>
    <property type="molecule type" value="mRNA"/>
</dbReference>
<dbReference type="EMBL" id="BC009937">
    <property type="protein sequence ID" value="AAH09937.1"/>
    <property type="molecule type" value="mRNA"/>
</dbReference>
<dbReference type="CCDS" id="CCDS8820.1"/>
<dbReference type="RefSeq" id="NP_001092143.1">
    <property type="nucleotide sequence ID" value="NM_001098673.2"/>
</dbReference>
<dbReference type="RefSeq" id="NP_068753.2">
    <property type="nucleotide sequence ID" value="NM_021934.4"/>
</dbReference>
<dbReference type="RefSeq" id="XP_024304888.1">
    <property type="nucleotide sequence ID" value="XM_024449120.2"/>
</dbReference>
<dbReference type="RefSeq" id="XP_054228802.1">
    <property type="nucleotide sequence ID" value="XM_054372827.1"/>
</dbReference>
<dbReference type="PDB" id="4WZG">
    <property type="method" value="X-ray"/>
    <property type="resolution" value="1.90 A"/>
    <property type="chains" value="A=1-218"/>
</dbReference>
<dbReference type="PDB" id="5C50">
    <property type="method" value="X-ray"/>
    <property type="resolution" value="1.63 A"/>
    <property type="chains" value="A=1-198"/>
</dbReference>
<dbReference type="PDB" id="5XUY">
    <property type="method" value="X-ray"/>
    <property type="resolution" value="2.20 A"/>
    <property type="chains" value="B/D=1-218"/>
</dbReference>
<dbReference type="PDB" id="5XV1">
    <property type="method" value="X-ray"/>
    <property type="resolution" value="2.51 A"/>
    <property type="chains" value="B/D=1-218"/>
</dbReference>
<dbReference type="PDB" id="5XV3">
    <property type="method" value="X-ray"/>
    <property type="resolution" value="2.57 A"/>
    <property type="chains" value="B/D=1-218"/>
</dbReference>
<dbReference type="PDB" id="5XV4">
    <property type="method" value="X-ray"/>
    <property type="resolution" value="2.95 A"/>
    <property type="chains" value="B/D/F/H/J/L/N/P=1-218"/>
</dbReference>
<dbReference type="PDB" id="5XV6">
    <property type="method" value="X-ray"/>
    <property type="resolution" value="2.46 A"/>
    <property type="chains" value="B=1-218"/>
</dbReference>
<dbReference type="PDB" id="8DO8">
    <property type="method" value="X-ray"/>
    <property type="resolution" value="2.41 A"/>
    <property type="chains" value="A/C/E/F=1-198"/>
</dbReference>
<dbReference type="PDBsum" id="4WZG"/>
<dbReference type="PDBsum" id="5C50"/>
<dbReference type="PDBsum" id="5XUY"/>
<dbReference type="PDBsum" id="5XV1"/>
<dbReference type="PDBsum" id="5XV3"/>
<dbReference type="PDBsum" id="5XV4"/>
<dbReference type="PDBsum" id="5XV6"/>
<dbReference type="PDBsum" id="8DO8"/>
<dbReference type="SMR" id="Q9BSB4"/>
<dbReference type="BioGRID" id="121948">
    <property type="interactions" value="96"/>
</dbReference>
<dbReference type="ComplexPortal" id="CPX-373">
    <property type="entry name" value="ULK1-ATG13-RB1CC1-ATG101 autophagy initiation complex"/>
</dbReference>
<dbReference type="CORUM" id="Q9BSB4"/>
<dbReference type="DIP" id="DIP-60653N"/>
<dbReference type="FunCoup" id="Q9BSB4">
    <property type="interactions" value="631"/>
</dbReference>
<dbReference type="IntAct" id="Q9BSB4">
    <property type="interactions" value="86"/>
</dbReference>
<dbReference type="MINT" id="Q9BSB4"/>
<dbReference type="STRING" id="9606.ENSP00000338990"/>
<dbReference type="TCDB" id="9.A.15.2.1">
    <property type="family name" value="the autophagy-related phagophore-formation transporter (apt) family"/>
</dbReference>
<dbReference type="iPTMnet" id="Q9BSB4"/>
<dbReference type="PhosphoSitePlus" id="Q9BSB4"/>
<dbReference type="BioMuta" id="ATG101"/>
<dbReference type="DMDM" id="74732983"/>
<dbReference type="jPOST" id="Q9BSB4"/>
<dbReference type="MassIVE" id="Q9BSB4"/>
<dbReference type="PaxDb" id="9606-ENSP00000338990"/>
<dbReference type="PeptideAtlas" id="Q9BSB4"/>
<dbReference type="ProteomicsDB" id="78873"/>
<dbReference type="Pumba" id="Q9BSB4"/>
<dbReference type="Antibodypedia" id="43032">
    <property type="antibodies" value="86 antibodies from 26 providers"/>
</dbReference>
<dbReference type="DNASU" id="60673"/>
<dbReference type="Ensembl" id="ENST00000336854.9">
    <property type="protein sequence ID" value="ENSP00000338990.4"/>
    <property type="gene ID" value="ENSG00000123395.15"/>
</dbReference>
<dbReference type="GeneID" id="60673"/>
<dbReference type="KEGG" id="hsa:60673"/>
<dbReference type="MANE-Select" id="ENST00000336854.9">
    <property type="protein sequence ID" value="ENSP00000338990.4"/>
    <property type="RefSeq nucleotide sequence ID" value="NM_021934.5"/>
    <property type="RefSeq protein sequence ID" value="NP_068753.2"/>
</dbReference>
<dbReference type="UCSC" id="uc001rzu.5">
    <property type="organism name" value="human"/>
</dbReference>
<dbReference type="AGR" id="HGNC:25679"/>
<dbReference type="CTD" id="60673"/>
<dbReference type="DisGeNET" id="60673"/>
<dbReference type="GeneCards" id="ATG101"/>
<dbReference type="HGNC" id="HGNC:25679">
    <property type="gene designation" value="ATG101"/>
</dbReference>
<dbReference type="HPA" id="ENSG00000123395">
    <property type="expression patterns" value="Low tissue specificity"/>
</dbReference>
<dbReference type="MIM" id="615089">
    <property type="type" value="gene"/>
</dbReference>
<dbReference type="neXtProt" id="NX_Q9BSB4"/>
<dbReference type="OpenTargets" id="ENSG00000123395"/>
<dbReference type="PharmGKB" id="PA143485374"/>
<dbReference type="VEuPathDB" id="HostDB:ENSG00000123395"/>
<dbReference type="eggNOG" id="KOG4493">
    <property type="taxonomic scope" value="Eukaryota"/>
</dbReference>
<dbReference type="GeneTree" id="ENSGT00390000016511"/>
<dbReference type="InParanoid" id="Q9BSB4"/>
<dbReference type="OMA" id="TMNCRSE"/>
<dbReference type="OrthoDB" id="10259639at2759"/>
<dbReference type="PAN-GO" id="Q9BSB4">
    <property type="GO annotations" value="2 GO annotations based on evolutionary models"/>
</dbReference>
<dbReference type="PhylomeDB" id="Q9BSB4"/>
<dbReference type="TreeFam" id="TF320996"/>
<dbReference type="PathwayCommons" id="Q9BSB4"/>
<dbReference type="Reactome" id="R-HSA-1632852">
    <property type="pathway name" value="Macroautophagy"/>
</dbReference>
<dbReference type="SignaLink" id="Q9BSB4"/>
<dbReference type="SIGNOR" id="Q9BSB4"/>
<dbReference type="BioGRID-ORCS" id="60673">
    <property type="hits" value="35 hits in 1143 CRISPR screens"/>
</dbReference>
<dbReference type="ChiTaRS" id="ATG101">
    <property type="organism name" value="human"/>
</dbReference>
<dbReference type="EvolutionaryTrace" id="Q9BSB4"/>
<dbReference type="GeneWiki" id="Autophagy-related_protein_101"/>
<dbReference type="GenomeRNAi" id="60673"/>
<dbReference type="Pharos" id="Q9BSB4">
    <property type="development level" value="Tbio"/>
</dbReference>
<dbReference type="PRO" id="PR:Q9BSB4"/>
<dbReference type="Proteomes" id="UP000005640">
    <property type="component" value="Chromosome 12"/>
</dbReference>
<dbReference type="RNAct" id="Q9BSB4">
    <property type="molecule type" value="protein"/>
</dbReference>
<dbReference type="Bgee" id="ENSG00000123395">
    <property type="expression patterns" value="Expressed in stromal cell of endometrium and 201 other cell types or tissues"/>
</dbReference>
<dbReference type="ExpressionAtlas" id="Q9BSB4">
    <property type="expression patterns" value="baseline and differential"/>
</dbReference>
<dbReference type="GO" id="GO:1990316">
    <property type="term" value="C:Atg1/ULK1 kinase complex"/>
    <property type="evidence" value="ECO:0000353"/>
    <property type="project" value="ComplexPortal"/>
</dbReference>
<dbReference type="GO" id="GO:0005829">
    <property type="term" value="C:cytosol"/>
    <property type="evidence" value="ECO:0000304"/>
    <property type="project" value="Reactome"/>
</dbReference>
<dbReference type="GO" id="GO:0005789">
    <property type="term" value="C:endoplasmic reticulum membrane"/>
    <property type="evidence" value="ECO:0000304"/>
    <property type="project" value="Reactome"/>
</dbReference>
<dbReference type="GO" id="GO:0000407">
    <property type="term" value="C:phagophore assembly site"/>
    <property type="evidence" value="ECO:0000314"/>
    <property type="project" value="UniProtKB"/>
</dbReference>
<dbReference type="GO" id="GO:0042802">
    <property type="term" value="F:identical protein binding"/>
    <property type="evidence" value="ECO:0000353"/>
    <property type="project" value="IntAct"/>
</dbReference>
<dbReference type="GO" id="GO:0019901">
    <property type="term" value="F:protein kinase binding"/>
    <property type="evidence" value="ECO:0000318"/>
    <property type="project" value="GO_Central"/>
</dbReference>
<dbReference type="GO" id="GO:0044877">
    <property type="term" value="F:protein-containing complex binding"/>
    <property type="evidence" value="ECO:0000353"/>
    <property type="project" value="UniProtKB"/>
</dbReference>
<dbReference type="GO" id="GO:0000045">
    <property type="term" value="P:autophagosome assembly"/>
    <property type="evidence" value="ECO:0000314"/>
    <property type="project" value="ComplexPortal"/>
</dbReference>
<dbReference type="GO" id="GO:0008285">
    <property type="term" value="P:negative regulation of cell population proliferation"/>
    <property type="evidence" value="ECO:0000314"/>
    <property type="project" value="ComplexPortal"/>
</dbReference>
<dbReference type="GO" id="GO:0010508">
    <property type="term" value="P:positive regulation of autophagy"/>
    <property type="evidence" value="ECO:0000266"/>
    <property type="project" value="ComplexPortal"/>
</dbReference>
<dbReference type="InterPro" id="IPR012445">
    <property type="entry name" value="ATG101"/>
</dbReference>
<dbReference type="PANTHER" id="PTHR13292">
    <property type="entry name" value="AUTOPHAGY-RELATED PROTEIN 101"/>
    <property type="match status" value="1"/>
</dbReference>
<dbReference type="PANTHER" id="PTHR13292:SF0">
    <property type="entry name" value="AUTOPHAGY-RELATED PROTEIN 101"/>
    <property type="match status" value="1"/>
</dbReference>
<dbReference type="Pfam" id="PF07855">
    <property type="entry name" value="ATG101"/>
    <property type="match status" value="1"/>
</dbReference>
<name>ATGA1_HUMAN</name>